<evidence type="ECO:0000255" key="1">
    <source>
        <dbReference type="HAMAP-Rule" id="MF_01185"/>
    </source>
</evidence>
<name>FLIW_BORT9</name>
<protein>
    <recommendedName>
        <fullName evidence="1">Flagellar assembly factor FliW</fullName>
    </recommendedName>
</protein>
<feature type="chain" id="PRO_1000164462" description="Flagellar assembly factor FliW">
    <location>
        <begin position="1"/>
        <end position="130"/>
    </location>
</feature>
<sequence>MKNEISIKFNFPEGILGFEEIKEFIIKDSEHKPFSIMQSINGEINFLVTSPFNFLEKYLPNIEEEDWLDIQTENEDEKVILCIINMHVKNYKEITANLKAPIILNKKKLIGKQAISTNEEHYLRYRVFKE</sequence>
<keyword id="KW-1005">Bacterial flagellum biogenesis</keyword>
<keyword id="KW-0143">Chaperone</keyword>
<keyword id="KW-0963">Cytoplasm</keyword>
<keyword id="KW-1185">Reference proteome</keyword>
<keyword id="KW-0810">Translation regulation</keyword>
<dbReference type="EMBL" id="CP000049">
    <property type="protein sequence ID" value="AAX17520.1"/>
    <property type="molecule type" value="Genomic_DNA"/>
</dbReference>
<dbReference type="RefSeq" id="WP_011772139.1">
    <property type="nucleotide sequence ID" value="NC_008710.1"/>
</dbReference>
<dbReference type="SMR" id="A1QYX8"/>
<dbReference type="KEGG" id="btu:BT0183"/>
<dbReference type="eggNOG" id="COG1699">
    <property type="taxonomic scope" value="Bacteria"/>
</dbReference>
<dbReference type="HOGENOM" id="CLU_112356_0_2_12"/>
<dbReference type="Proteomes" id="UP000001205">
    <property type="component" value="Chromosome"/>
</dbReference>
<dbReference type="GO" id="GO:0005737">
    <property type="term" value="C:cytoplasm"/>
    <property type="evidence" value="ECO:0007669"/>
    <property type="project" value="UniProtKB-SubCell"/>
</dbReference>
<dbReference type="GO" id="GO:0044780">
    <property type="term" value="P:bacterial-type flagellum assembly"/>
    <property type="evidence" value="ECO:0007669"/>
    <property type="project" value="UniProtKB-UniRule"/>
</dbReference>
<dbReference type="GO" id="GO:0006417">
    <property type="term" value="P:regulation of translation"/>
    <property type="evidence" value="ECO:0007669"/>
    <property type="project" value="UniProtKB-KW"/>
</dbReference>
<dbReference type="Gene3D" id="2.30.290.10">
    <property type="entry name" value="BH3618-like"/>
    <property type="match status" value="1"/>
</dbReference>
<dbReference type="HAMAP" id="MF_01185">
    <property type="entry name" value="FliW"/>
    <property type="match status" value="1"/>
</dbReference>
<dbReference type="InterPro" id="IPR003775">
    <property type="entry name" value="Flagellar_assembly_factor_FliW"/>
</dbReference>
<dbReference type="InterPro" id="IPR024046">
    <property type="entry name" value="Flagellar_assmbl_FliW_dom_sf"/>
</dbReference>
<dbReference type="NCBIfam" id="NF009793">
    <property type="entry name" value="PRK13285.1-1"/>
    <property type="match status" value="1"/>
</dbReference>
<dbReference type="PANTHER" id="PTHR39190">
    <property type="entry name" value="FLAGELLAR ASSEMBLY FACTOR FLIW"/>
    <property type="match status" value="1"/>
</dbReference>
<dbReference type="PANTHER" id="PTHR39190:SF1">
    <property type="entry name" value="FLAGELLAR ASSEMBLY FACTOR FLIW"/>
    <property type="match status" value="1"/>
</dbReference>
<dbReference type="Pfam" id="PF02623">
    <property type="entry name" value="FliW"/>
    <property type="match status" value="1"/>
</dbReference>
<dbReference type="SUPFAM" id="SSF141457">
    <property type="entry name" value="BH3618-like"/>
    <property type="match status" value="1"/>
</dbReference>
<gene>
    <name evidence="1" type="primary">fliW</name>
    <name type="ordered locus">BT0183</name>
</gene>
<comment type="function">
    <text evidence="1">Acts as an anti-CsrA protein, binds CsrA and prevents it from repressing translation of its target genes, one of which is flagellin. Binds to flagellin and participates in the assembly of the flagellum.</text>
</comment>
<comment type="subunit">
    <text evidence="1">Interacts with translational regulator CsrA and flagellin(s).</text>
</comment>
<comment type="subcellular location">
    <subcellularLocation>
        <location evidence="1">Cytoplasm</location>
    </subcellularLocation>
</comment>
<comment type="similarity">
    <text evidence="1">Belongs to the FliW family.</text>
</comment>
<organism>
    <name type="scientific">Borrelia turicatae (strain 91E135)</name>
    <dbReference type="NCBI Taxonomy" id="314724"/>
    <lineage>
        <taxon>Bacteria</taxon>
        <taxon>Pseudomonadati</taxon>
        <taxon>Spirochaetota</taxon>
        <taxon>Spirochaetia</taxon>
        <taxon>Spirochaetales</taxon>
        <taxon>Borreliaceae</taxon>
        <taxon>Borrelia</taxon>
    </lineage>
</organism>
<proteinExistence type="inferred from homology"/>
<reference key="1">
    <citation type="submission" date="2004-12" db="EMBL/GenBank/DDBJ databases">
        <title>The genome sequence of Borrelia hermsii and Borrelia turicatae: comparative analysis of two agents of endemic N. America relapsing fever.</title>
        <authorList>
            <person name="Porcella S.F."/>
            <person name="Raffel S.J."/>
            <person name="Schrumpf M.E."/>
            <person name="Montgomery B."/>
            <person name="Smith T."/>
            <person name="Schwan T.G."/>
        </authorList>
    </citation>
    <scope>NUCLEOTIDE SEQUENCE [LARGE SCALE GENOMIC DNA]</scope>
    <source>
        <strain>91E135</strain>
    </source>
</reference>
<accession>A1QYX8</accession>